<gene>
    <name type="primary">Defb19</name>
    <name type="synonym">Defb24</name>
    <name type="synonym">Tdl</name>
</gene>
<organism>
    <name type="scientific">Mus musculus</name>
    <name type="common">Mouse</name>
    <dbReference type="NCBI Taxonomy" id="10090"/>
    <lineage>
        <taxon>Eukaryota</taxon>
        <taxon>Metazoa</taxon>
        <taxon>Chordata</taxon>
        <taxon>Craniata</taxon>
        <taxon>Vertebrata</taxon>
        <taxon>Euteleostomi</taxon>
        <taxon>Mammalia</taxon>
        <taxon>Eutheria</taxon>
        <taxon>Euarchontoglires</taxon>
        <taxon>Glires</taxon>
        <taxon>Rodentia</taxon>
        <taxon>Myomorpha</taxon>
        <taxon>Muroidea</taxon>
        <taxon>Muridae</taxon>
        <taxon>Murinae</taxon>
        <taxon>Mus</taxon>
        <taxon>Mus</taxon>
    </lineage>
</organism>
<keyword id="KW-0044">Antibiotic</keyword>
<keyword id="KW-0929">Antimicrobial</keyword>
<keyword id="KW-0211">Defensin</keyword>
<keyword id="KW-1015">Disulfide bond</keyword>
<keyword id="KW-1185">Reference proteome</keyword>
<keyword id="KW-0964">Secreted</keyword>
<keyword id="KW-0732">Signal</keyword>
<comment type="function">
    <text evidence="1">Has antibacterial activity.</text>
</comment>
<comment type="subcellular location">
    <subcellularLocation>
        <location evidence="1">Secreted</location>
    </subcellularLocation>
</comment>
<comment type="tissue specificity">
    <text evidence="3">Specifically expressed in male gonads (Sertoli cells).</text>
</comment>
<comment type="developmental stage">
    <text evidence="3">Not detected at 11.5 dpc. Specific signals are observed within seminiferous cords in male gonads at 12.5, 13.5, 14.5, and 16.5 dpc and in newborn testes. In 16.5 and newborn testes, its expression is also found in epididymis. No specific signal is found in female gonads.</text>
</comment>
<comment type="similarity">
    <text evidence="4">Belongs to the beta-defensin family.</text>
</comment>
<feature type="signal peptide" evidence="2">
    <location>
        <begin position="1"/>
        <end position="19"/>
    </location>
</feature>
<feature type="peptide" id="PRO_0000006944" description="Beta-defensin 19">
    <location>
        <begin position="20"/>
        <end position="83"/>
    </location>
</feature>
<feature type="disulfide bond" evidence="1">
    <location>
        <begin position="27"/>
        <end position="54"/>
    </location>
</feature>
<feature type="disulfide bond" evidence="1">
    <location>
        <begin position="34"/>
        <end position="48"/>
    </location>
</feature>
<feature type="disulfide bond" evidence="1">
    <location>
        <begin position="38"/>
        <end position="55"/>
    </location>
</feature>
<evidence type="ECO:0000250" key="1"/>
<evidence type="ECO:0000255" key="2"/>
<evidence type="ECO:0000269" key="3">
    <source>
    </source>
</evidence>
<evidence type="ECO:0000305" key="4"/>
<accession>Q8K3I8</accession>
<accession>Q3V0L7</accession>
<dbReference type="EMBL" id="AY098993">
    <property type="protein sequence ID" value="AAM28243.1"/>
    <property type="molecule type" value="mRNA"/>
</dbReference>
<dbReference type="EMBL" id="AF532614">
    <property type="protein sequence ID" value="AAO27571.1"/>
    <property type="molecule type" value="mRNA"/>
</dbReference>
<dbReference type="EMBL" id="DQ012035">
    <property type="protein sequence ID" value="AAY59771.1"/>
    <property type="molecule type" value="mRNA"/>
</dbReference>
<dbReference type="EMBL" id="AK133049">
    <property type="protein sequence ID" value="BAE21487.1"/>
    <property type="molecule type" value="mRNA"/>
</dbReference>
<dbReference type="EMBL" id="AL845162">
    <property type="status" value="NOT_ANNOTATED_CDS"/>
    <property type="molecule type" value="Genomic_DNA"/>
</dbReference>
<dbReference type="EMBL" id="BC049701">
    <property type="protein sequence ID" value="AAH49701.1"/>
    <property type="molecule type" value="mRNA"/>
</dbReference>
<dbReference type="CCDS" id="CCDS38277.1"/>
<dbReference type="RefSeq" id="NP_660139.1">
    <property type="nucleotide sequence ID" value="NM_145157.3"/>
</dbReference>
<dbReference type="STRING" id="10090.ENSMUSP00000059585"/>
<dbReference type="SwissPalm" id="Q8K3I8"/>
<dbReference type="PaxDb" id="10090-ENSMUSP00000059585"/>
<dbReference type="ProteomicsDB" id="279636"/>
<dbReference type="DNASU" id="246700"/>
<dbReference type="Ensembl" id="ENSMUST00000053180.4">
    <property type="protein sequence ID" value="ENSMUSP00000059585.4"/>
    <property type="gene ID" value="ENSMUSG00000050645.4"/>
</dbReference>
<dbReference type="GeneID" id="246700"/>
<dbReference type="KEGG" id="mmu:246700"/>
<dbReference type="UCSC" id="uc008nfs.1">
    <property type="organism name" value="mouse"/>
</dbReference>
<dbReference type="AGR" id="MGI:2385955"/>
<dbReference type="CTD" id="246700"/>
<dbReference type="MGI" id="MGI:2385955">
    <property type="gene designation" value="Defb19"/>
</dbReference>
<dbReference type="VEuPathDB" id="HostDB:ENSMUSG00000050645"/>
<dbReference type="eggNOG" id="ENOG502TDXM">
    <property type="taxonomic scope" value="Eukaryota"/>
</dbReference>
<dbReference type="GeneTree" id="ENSGT00510000050451"/>
<dbReference type="HOGENOM" id="CLU_193927_0_0_1"/>
<dbReference type="InParanoid" id="Q8K3I8"/>
<dbReference type="OMA" id="QENRWPK"/>
<dbReference type="OrthoDB" id="9624411at2759"/>
<dbReference type="PhylomeDB" id="Q8K3I8"/>
<dbReference type="Reactome" id="R-MMU-1461957">
    <property type="pathway name" value="Beta defensins"/>
</dbReference>
<dbReference type="Reactome" id="R-MMU-1461973">
    <property type="pathway name" value="Defensins"/>
</dbReference>
<dbReference type="BioGRID-ORCS" id="246700">
    <property type="hits" value="1 hit in 76 CRISPR screens"/>
</dbReference>
<dbReference type="PRO" id="PR:Q8K3I8"/>
<dbReference type="Proteomes" id="UP000000589">
    <property type="component" value="Chromosome 2"/>
</dbReference>
<dbReference type="RNAct" id="Q8K3I8">
    <property type="molecule type" value="protein"/>
</dbReference>
<dbReference type="Bgee" id="ENSMUSG00000050645">
    <property type="expression patterns" value="Expressed in gonadal ridge and 32 other cell types or tissues"/>
</dbReference>
<dbReference type="GO" id="GO:0005576">
    <property type="term" value="C:extracellular region"/>
    <property type="evidence" value="ECO:0007669"/>
    <property type="project" value="UniProtKB-SubCell"/>
</dbReference>
<dbReference type="GO" id="GO:0050829">
    <property type="term" value="P:defense response to Gram-negative bacterium"/>
    <property type="evidence" value="ECO:0007669"/>
    <property type="project" value="InterPro"/>
</dbReference>
<dbReference type="GO" id="GO:0050830">
    <property type="term" value="P:defense response to Gram-positive bacterium"/>
    <property type="evidence" value="ECO:0007669"/>
    <property type="project" value="InterPro"/>
</dbReference>
<dbReference type="InterPro" id="IPR028060">
    <property type="entry name" value="Defensin_big_dom"/>
</dbReference>
<dbReference type="PANTHER" id="PTHR47902">
    <property type="entry name" value="BETA-DEFENSIN 119"/>
    <property type="match status" value="1"/>
</dbReference>
<dbReference type="PANTHER" id="PTHR47902:SF1">
    <property type="entry name" value="BETA-DEFENSIN 119"/>
    <property type="match status" value="1"/>
</dbReference>
<dbReference type="Pfam" id="PF14862">
    <property type="entry name" value="Defensin_big"/>
    <property type="match status" value="1"/>
</dbReference>
<sequence>MRLALLLLAILVATELVVSGKNPILQCMGNRGFCRSSCKKSEQAYFYCRTFQMCCLQSYVRISLTGVDDNTNWSYEKHWPRIP</sequence>
<proteinExistence type="evidence at protein level"/>
<reference key="1">
    <citation type="journal article" date="2002" name="Mech. Dev.">
        <title>Testis-specific expression of a novel mouse defensin-like gene, Tdl.</title>
        <authorList>
            <person name="Yamamoto M."/>
            <person name="Matsui Y."/>
        </authorList>
    </citation>
    <scope>NUCLEOTIDE SEQUENCE [MRNA]</scope>
    <scope>TISSUE SPECIFICITY</scope>
    <scope>DEVELOPMENTAL STAGE</scope>
    <source>
        <strain>C57BL/6 X DBA/2</strain>
    </source>
</reference>
<reference key="2">
    <citation type="journal article" date="2002" name="Gene Expr. Patterns">
        <title>Sexually dimorphic gene expression in the developing mouse gonad.</title>
        <authorList>
            <person name="Menke D.B."/>
            <person name="Page D.C."/>
        </authorList>
    </citation>
    <scope>NUCLEOTIDE SEQUENCE [MRNA]</scope>
    <source>
        <strain>C57BL/6J</strain>
        <tissue>Testis</tissue>
    </source>
</reference>
<reference key="3">
    <citation type="journal article" date="2005" name="Physiol. Genomics">
        <title>Cross-species analysis of the mammalian beta-defensin gene family: presence of syntenic gene clusters and preferential expression in the male reproductive tract.</title>
        <authorList>
            <person name="Patil A.A."/>
            <person name="Cai Y."/>
            <person name="Sang Y."/>
            <person name="Blecha F."/>
            <person name="Zhang G."/>
        </authorList>
    </citation>
    <scope>NUCLEOTIDE SEQUENCE [MRNA]</scope>
</reference>
<reference key="4">
    <citation type="journal article" date="2005" name="Science">
        <title>The transcriptional landscape of the mammalian genome.</title>
        <authorList>
            <person name="Carninci P."/>
            <person name="Kasukawa T."/>
            <person name="Katayama S."/>
            <person name="Gough J."/>
            <person name="Frith M.C."/>
            <person name="Maeda N."/>
            <person name="Oyama R."/>
            <person name="Ravasi T."/>
            <person name="Lenhard B."/>
            <person name="Wells C."/>
            <person name="Kodzius R."/>
            <person name="Shimokawa K."/>
            <person name="Bajic V.B."/>
            <person name="Brenner S.E."/>
            <person name="Batalov S."/>
            <person name="Forrest A.R."/>
            <person name="Zavolan M."/>
            <person name="Davis M.J."/>
            <person name="Wilming L.G."/>
            <person name="Aidinis V."/>
            <person name="Allen J.E."/>
            <person name="Ambesi-Impiombato A."/>
            <person name="Apweiler R."/>
            <person name="Aturaliya R.N."/>
            <person name="Bailey T.L."/>
            <person name="Bansal M."/>
            <person name="Baxter L."/>
            <person name="Beisel K.W."/>
            <person name="Bersano T."/>
            <person name="Bono H."/>
            <person name="Chalk A.M."/>
            <person name="Chiu K.P."/>
            <person name="Choudhary V."/>
            <person name="Christoffels A."/>
            <person name="Clutterbuck D.R."/>
            <person name="Crowe M.L."/>
            <person name="Dalla E."/>
            <person name="Dalrymple B.P."/>
            <person name="de Bono B."/>
            <person name="Della Gatta G."/>
            <person name="di Bernardo D."/>
            <person name="Down T."/>
            <person name="Engstrom P."/>
            <person name="Fagiolini M."/>
            <person name="Faulkner G."/>
            <person name="Fletcher C.F."/>
            <person name="Fukushima T."/>
            <person name="Furuno M."/>
            <person name="Futaki S."/>
            <person name="Gariboldi M."/>
            <person name="Georgii-Hemming P."/>
            <person name="Gingeras T.R."/>
            <person name="Gojobori T."/>
            <person name="Green R.E."/>
            <person name="Gustincich S."/>
            <person name="Harbers M."/>
            <person name="Hayashi Y."/>
            <person name="Hensch T.K."/>
            <person name="Hirokawa N."/>
            <person name="Hill D."/>
            <person name="Huminiecki L."/>
            <person name="Iacono M."/>
            <person name="Ikeo K."/>
            <person name="Iwama A."/>
            <person name="Ishikawa T."/>
            <person name="Jakt M."/>
            <person name="Kanapin A."/>
            <person name="Katoh M."/>
            <person name="Kawasawa Y."/>
            <person name="Kelso J."/>
            <person name="Kitamura H."/>
            <person name="Kitano H."/>
            <person name="Kollias G."/>
            <person name="Krishnan S.P."/>
            <person name="Kruger A."/>
            <person name="Kummerfeld S.K."/>
            <person name="Kurochkin I.V."/>
            <person name="Lareau L.F."/>
            <person name="Lazarevic D."/>
            <person name="Lipovich L."/>
            <person name="Liu J."/>
            <person name="Liuni S."/>
            <person name="McWilliam S."/>
            <person name="Madan Babu M."/>
            <person name="Madera M."/>
            <person name="Marchionni L."/>
            <person name="Matsuda H."/>
            <person name="Matsuzawa S."/>
            <person name="Miki H."/>
            <person name="Mignone F."/>
            <person name="Miyake S."/>
            <person name="Morris K."/>
            <person name="Mottagui-Tabar S."/>
            <person name="Mulder N."/>
            <person name="Nakano N."/>
            <person name="Nakauchi H."/>
            <person name="Ng P."/>
            <person name="Nilsson R."/>
            <person name="Nishiguchi S."/>
            <person name="Nishikawa S."/>
            <person name="Nori F."/>
            <person name="Ohara O."/>
            <person name="Okazaki Y."/>
            <person name="Orlando V."/>
            <person name="Pang K.C."/>
            <person name="Pavan W.J."/>
            <person name="Pavesi G."/>
            <person name="Pesole G."/>
            <person name="Petrovsky N."/>
            <person name="Piazza S."/>
            <person name="Reed J."/>
            <person name="Reid J.F."/>
            <person name="Ring B.Z."/>
            <person name="Ringwald M."/>
            <person name="Rost B."/>
            <person name="Ruan Y."/>
            <person name="Salzberg S.L."/>
            <person name="Sandelin A."/>
            <person name="Schneider C."/>
            <person name="Schoenbach C."/>
            <person name="Sekiguchi K."/>
            <person name="Semple C.A."/>
            <person name="Seno S."/>
            <person name="Sessa L."/>
            <person name="Sheng Y."/>
            <person name="Shibata Y."/>
            <person name="Shimada H."/>
            <person name="Shimada K."/>
            <person name="Silva D."/>
            <person name="Sinclair B."/>
            <person name="Sperling S."/>
            <person name="Stupka E."/>
            <person name="Sugiura K."/>
            <person name="Sultana R."/>
            <person name="Takenaka Y."/>
            <person name="Taki K."/>
            <person name="Tammoja K."/>
            <person name="Tan S.L."/>
            <person name="Tang S."/>
            <person name="Taylor M.S."/>
            <person name="Tegner J."/>
            <person name="Teichmann S.A."/>
            <person name="Ueda H.R."/>
            <person name="van Nimwegen E."/>
            <person name="Verardo R."/>
            <person name="Wei C.L."/>
            <person name="Yagi K."/>
            <person name="Yamanishi H."/>
            <person name="Zabarovsky E."/>
            <person name="Zhu S."/>
            <person name="Zimmer A."/>
            <person name="Hide W."/>
            <person name="Bult C."/>
            <person name="Grimmond S.M."/>
            <person name="Teasdale R.D."/>
            <person name="Liu E.T."/>
            <person name="Brusic V."/>
            <person name="Quackenbush J."/>
            <person name="Wahlestedt C."/>
            <person name="Mattick J.S."/>
            <person name="Hume D.A."/>
            <person name="Kai C."/>
            <person name="Sasaki D."/>
            <person name="Tomaru Y."/>
            <person name="Fukuda S."/>
            <person name="Kanamori-Katayama M."/>
            <person name="Suzuki M."/>
            <person name="Aoki J."/>
            <person name="Arakawa T."/>
            <person name="Iida J."/>
            <person name="Imamura K."/>
            <person name="Itoh M."/>
            <person name="Kato T."/>
            <person name="Kawaji H."/>
            <person name="Kawagashira N."/>
            <person name="Kawashima T."/>
            <person name="Kojima M."/>
            <person name="Kondo S."/>
            <person name="Konno H."/>
            <person name="Nakano K."/>
            <person name="Ninomiya N."/>
            <person name="Nishio T."/>
            <person name="Okada M."/>
            <person name="Plessy C."/>
            <person name="Shibata K."/>
            <person name="Shiraki T."/>
            <person name="Suzuki S."/>
            <person name="Tagami M."/>
            <person name="Waki K."/>
            <person name="Watahiki A."/>
            <person name="Okamura-Oho Y."/>
            <person name="Suzuki H."/>
            <person name="Kawai J."/>
            <person name="Hayashizaki Y."/>
        </authorList>
    </citation>
    <scope>NUCLEOTIDE SEQUENCE [LARGE SCALE MRNA]</scope>
    <source>
        <strain>C57BL/6J</strain>
        <tissue>Testis</tissue>
    </source>
</reference>
<reference key="5">
    <citation type="journal article" date="2009" name="PLoS Biol.">
        <title>Lineage-specific biology revealed by a finished genome assembly of the mouse.</title>
        <authorList>
            <person name="Church D.M."/>
            <person name="Goodstadt L."/>
            <person name="Hillier L.W."/>
            <person name="Zody M.C."/>
            <person name="Goldstein S."/>
            <person name="She X."/>
            <person name="Bult C.J."/>
            <person name="Agarwala R."/>
            <person name="Cherry J.L."/>
            <person name="DiCuccio M."/>
            <person name="Hlavina W."/>
            <person name="Kapustin Y."/>
            <person name="Meric P."/>
            <person name="Maglott D."/>
            <person name="Birtle Z."/>
            <person name="Marques A.C."/>
            <person name="Graves T."/>
            <person name="Zhou S."/>
            <person name="Teague B."/>
            <person name="Potamousis K."/>
            <person name="Churas C."/>
            <person name="Place M."/>
            <person name="Herschleb J."/>
            <person name="Runnheim R."/>
            <person name="Forrest D."/>
            <person name="Amos-Landgraf J."/>
            <person name="Schwartz D.C."/>
            <person name="Cheng Z."/>
            <person name="Lindblad-Toh K."/>
            <person name="Eichler E.E."/>
            <person name="Ponting C.P."/>
        </authorList>
    </citation>
    <scope>NUCLEOTIDE SEQUENCE [LARGE SCALE GENOMIC DNA]</scope>
    <source>
        <strain>C57BL/6J</strain>
    </source>
</reference>
<reference key="6">
    <citation type="journal article" date="2004" name="Genome Res.">
        <title>The status, quality, and expansion of the NIH full-length cDNA project: the Mammalian Gene Collection (MGC).</title>
        <authorList>
            <consortium name="The MGC Project Team"/>
        </authorList>
    </citation>
    <scope>NUCLEOTIDE SEQUENCE [LARGE SCALE MRNA]</scope>
    <source>
        <tissue>Testis</tissue>
    </source>
</reference>
<reference key="7">
    <citation type="journal article" date="2010" name="Cell">
        <title>A tissue-specific atlas of mouse protein phosphorylation and expression.</title>
        <authorList>
            <person name="Huttlin E.L."/>
            <person name="Jedrychowski M.P."/>
            <person name="Elias J.E."/>
            <person name="Goswami T."/>
            <person name="Rad R."/>
            <person name="Beausoleil S.A."/>
            <person name="Villen J."/>
            <person name="Haas W."/>
            <person name="Sowa M.E."/>
            <person name="Gygi S.P."/>
        </authorList>
    </citation>
    <scope>IDENTIFICATION BY MASS SPECTROMETRY [LARGE SCALE ANALYSIS]</scope>
    <source>
        <tissue>Testis</tissue>
    </source>
</reference>
<name>DFB19_MOUSE</name>
<protein>
    <recommendedName>
        <fullName>Beta-defensin 19</fullName>
        <shortName>BD-19</shortName>
        <shortName>mBD-19</shortName>
    </recommendedName>
    <alternativeName>
        <fullName>Defensin, beta 19</fullName>
    </alternativeName>
    <alternativeName>
        <fullName>Testis-specific beta-defensin-like protein</fullName>
    </alternativeName>
</protein>